<reference key="1">
    <citation type="submission" date="2007-10" db="EMBL/GenBank/DDBJ databases">
        <title>Genome sequence of Campylobacter concisus 13826 isolated from human feces.</title>
        <authorList>
            <person name="Fouts D.E."/>
            <person name="Mongodin E.F."/>
            <person name="Puiu D."/>
            <person name="Sebastian Y."/>
            <person name="Miller W.G."/>
            <person name="Mandrell R.E."/>
            <person name="On S."/>
            <person name="Nelson K.E."/>
        </authorList>
    </citation>
    <scope>NUCLEOTIDE SEQUENCE [LARGE SCALE GENOMIC DNA]</scope>
    <source>
        <strain>13826</strain>
    </source>
</reference>
<organism>
    <name type="scientific">Campylobacter concisus (strain 13826)</name>
    <dbReference type="NCBI Taxonomy" id="360104"/>
    <lineage>
        <taxon>Bacteria</taxon>
        <taxon>Pseudomonadati</taxon>
        <taxon>Campylobacterota</taxon>
        <taxon>Epsilonproteobacteria</taxon>
        <taxon>Campylobacterales</taxon>
        <taxon>Campylobacteraceae</taxon>
        <taxon>Campylobacter</taxon>
    </lineage>
</organism>
<comment type="function">
    <text evidence="2">Cell wall formation.</text>
</comment>
<comment type="catalytic activity">
    <reaction evidence="2">
        <text>2 D-alanine + ATP = D-alanyl-D-alanine + ADP + phosphate + H(+)</text>
        <dbReference type="Rhea" id="RHEA:11224"/>
        <dbReference type="ChEBI" id="CHEBI:15378"/>
        <dbReference type="ChEBI" id="CHEBI:30616"/>
        <dbReference type="ChEBI" id="CHEBI:43474"/>
        <dbReference type="ChEBI" id="CHEBI:57416"/>
        <dbReference type="ChEBI" id="CHEBI:57822"/>
        <dbReference type="ChEBI" id="CHEBI:456216"/>
        <dbReference type="EC" id="6.3.2.4"/>
    </reaction>
</comment>
<comment type="cofactor">
    <cofactor evidence="1">
        <name>Mg(2+)</name>
        <dbReference type="ChEBI" id="CHEBI:18420"/>
    </cofactor>
    <cofactor evidence="1">
        <name>Mn(2+)</name>
        <dbReference type="ChEBI" id="CHEBI:29035"/>
    </cofactor>
    <text evidence="1">Binds 2 magnesium or manganese ions per subunit.</text>
</comment>
<comment type="pathway">
    <text evidence="2">Cell wall biogenesis; peptidoglycan biosynthesis.</text>
</comment>
<comment type="subcellular location">
    <subcellularLocation>
        <location evidence="2">Cytoplasm</location>
    </subcellularLocation>
</comment>
<comment type="similarity">
    <text evidence="2">Belongs to the D-alanine--D-alanine ligase family.</text>
</comment>
<name>DDL_CAMC1</name>
<accession>A8Z6L3</accession>
<sequence length="346" mass="39166">MNLGVIFGAKSFEHEISIVSAIVLKNVLKQGLKFIFCDANRDFYLIEQKDMRANFFSSGKYKNSKKLSLAKGGFYTHSLFGANKVECDVIINLIHGMDGEDGKIAALFEFYGVKYIGPRLEASALSYNKELTKFLAQKAGVKALDYEMLTRQSEPKFHYPIILKPARLGSSIGVSVVHDDSELAYAKDVAFEFDKDVLVEPFIKGVKEYNLAGCRIDGKIKFSIVEEPKKKEFLDYEQKYLSFSNENKVKEAEISEELKQKLKFNFSKIYDCGFDGAIIRCDFFVIDDEVYLNEINPNPGSLANYLFEDFESTLNALANSLPKEREIKIDYKFINSITSVKGSGKL</sequence>
<keyword id="KW-0067">ATP-binding</keyword>
<keyword id="KW-0133">Cell shape</keyword>
<keyword id="KW-0961">Cell wall biogenesis/degradation</keyword>
<keyword id="KW-0963">Cytoplasm</keyword>
<keyword id="KW-0436">Ligase</keyword>
<keyword id="KW-0460">Magnesium</keyword>
<keyword id="KW-0464">Manganese</keyword>
<keyword id="KW-0479">Metal-binding</keyword>
<keyword id="KW-0547">Nucleotide-binding</keyword>
<keyword id="KW-0573">Peptidoglycan synthesis</keyword>
<feature type="chain" id="PRO_1000074764" description="D-alanine--D-alanine ligase">
    <location>
        <begin position="1"/>
        <end position="346"/>
    </location>
</feature>
<feature type="domain" description="ATP-grasp" evidence="2">
    <location>
        <begin position="133"/>
        <end position="326"/>
    </location>
</feature>
<feature type="binding site" evidence="2">
    <location>
        <begin position="159"/>
        <end position="209"/>
    </location>
    <ligand>
        <name>ATP</name>
        <dbReference type="ChEBI" id="CHEBI:30616"/>
    </ligand>
</feature>
<feature type="binding site" evidence="2">
    <location>
        <position position="282"/>
    </location>
    <ligand>
        <name>Mg(2+)</name>
        <dbReference type="ChEBI" id="CHEBI:18420"/>
        <label>1</label>
    </ligand>
</feature>
<feature type="binding site" evidence="2">
    <location>
        <position position="294"/>
    </location>
    <ligand>
        <name>Mg(2+)</name>
        <dbReference type="ChEBI" id="CHEBI:18420"/>
        <label>1</label>
    </ligand>
</feature>
<feature type="binding site" evidence="2">
    <location>
        <position position="294"/>
    </location>
    <ligand>
        <name>Mg(2+)</name>
        <dbReference type="ChEBI" id="CHEBI:18420"/>
        <label>2</label>
    </ligand>
</feature>
<feature type="binding site" evidence="2">
    <location>
        <position position="296"/>
    </location>
    <ligand>
        <name>Mg(2+)</name>
        <dbReference type="ChEBI" id="CHEBI:18420"/>
        <label>2</label>
    </ligand>
</feature>
<gene>
    <name evidence="2" type="primary">ddl</name>
    <name type="ordered locus">Ccon26_10470</name>
    <name type="ORF">CCC13826_0112</name>
</gene>
<evidence type="ECO:0000250" key="1"/>
<evidence type="ECO:0000255" key="2">
    <source>
        <dbReference type="HAMAP-Rule" id="MF_00047"/>
    </source>
</evidence>
<dbReference type="EC" id="6.3.2.4" evidence="2"/>
<dbReference type="EMBL" id="CP000792">
    <property type="protein sequence ID" value="ABW74793.1"/>
    <property type="molecule type" value="Genomic_DNA"/>
</dbReference>
<dbReference type="RefSeq" id="WP_048809820.1">
    <property type="nucleotide sequence ID" value="NC_009802.2"/>
</dbReference>
<dbReference type="SMR" id="A8Z6L3"/>
<dbReference type="STRING" id="360104.CCC13826_0112"/>
<dbReference type="KEGG" id="cco:CCC13826_0112"/>
<dbReference type="eggNOG" id="COG1181">
    <property type="taxonomic scope" value="Bacteria"/>
</dbReference>
<dbReference type="HOGENOM" id="CLU_039268_0_2_7"/>
<dbReference type="OrthoDB" id="9813261at2"/>
<dbReference type="UniPathway" id="UPA00219"/>
<dbReference type="Proteomes" id="UP000001121">
    <property type="component" value="Chromosome"/>
</dbReference>
<dbReference type="GO" id="GO:0005737">
    <property type="term" value="C:cytoplasm"/>
    <property type="evidence" value="ECO:0007669"/>
    <property type="project" value="UniProtKB-SubCell"/>
</dbReference>
<dbReference type="GO" id="GO:0005524">
    <property type="term" value="F:ATP binding"/>
    <property type="evidence" value="ECO:0007669"/>
    <property type="project" value="UniProtKB-KW"/>
</dbReference>
<dbReference type="GO" id="GO:0008716">
    <property type="term" value="F:D-alanine-D-alanine ligase activity"/>
    <property type="evidence" value="ECO:0007669"/>
    <property type="project" value="UniProtKB-UniRule"/>
</dbReference>
<dbReference type="GO" id="GO:0046872">
    <property type="term" value="F:metal ion binding"/>
    <property type="evidence" value="ECO:0007669"/>
    <property type="project" value="UniProtKB-KW"/>
</dbReference>
<dbReference type="GO" id="GO:0071555">
    <property type="term" value="P:cell wall organization"/>
    <property type="evidence" value="ECO:0007669"/>
    <property type="project" value="UniProtKB-KW"/>
</dbReference>
<dbReference type="GO" id="GO:0009252">
    <property type="term" value="P:peptidoglycan biosynthetic process"/>
    <property type="evidence" value="ECO:0007669"/>
    <property type="project" value="UniProtKB-UniRule"/>
</dbReference>
<dbReference type="GO" id="GO:0008360">
    <property type="term" value="P:regulation of cell shape"/>
    <property type="evidence" value="ECO:0007669"/>
    <property type="project" value="UniProtKB-KW"/>
</dbReference>
<dbReference type="Gene3D" id="3.40.50.20">
    <property type="match status" value="1"/>
</dbReference>
<dbReference type="Gene3D" id="3.30.1490.20">
    <property type="entry name" value="ATP-grasp fold, A domain"/>
    <property type="match status" value="1"/>
</dbReference>
<dbReference type="Gene3D" id="3.30.470.20">
    <property type="entry name" value="ATP-grasp fold, B domain"/>
    <property type="match status" value="1"/>
</dbReference>
<dbReference type="HAMAP" id="MF_00047">
    <property type="entry name" value="Dala_Dala_lig"/>
    <property type="match status" value="1"/>
</dbReference>
<dbReference type="InterPro" id="IPR011761">
    <property type="entry name" value="ATP-grasp"/>
</dbReference>
<dbReference type="InterPro" id="IPR013815">
    <property type="entry name" value="ATP_grasp_subdomain_1"/>
</dbReference>
<dbReference type="InterPro" id="IPR000291">
    <property type="entry name" value="D-Ala_lig_Van_CS"/>
</dbReference>
<dbReference type="InterPro" id="IPR005905">
    <property type="entry name" value="D_ala_D_ala"/>
</dbReference>
<dbReference type="InterPro" id="IPR011095">
    <property type="entry name" value="Dala_Dala_lig_C"/>
</dbReference>
<dbReference type="InterPro" id="IPR011127">
    <property type="entry name" value="Dala_Dala_lig_N"/>
</dbReference>
<dbReference type="InterPro" id="IPR016185">
    <property type="entry name" value="PreATP-grasp_dom_sf"/>
</dbReference>
<dbReference type="NCBIfam" id="TIGR01205">
    <property type="entry name" value="D_ala_D_alaTIGR"/>
    <property type="match status" value="1"/>
</dbReference>
<dbReference type="NCBIfam" id="NF002527">
    <property type="entry name" value="PRK01966.1-3"/>
    <property type="match status" value="1"/>
</dbReference>
<dbReference type="PANTHER" id="PTHR23132">
    <property type="entry name" value="D-ALANINE--D-ALANINE LIGASE"/>
    <property type="match status" value="1"/>
</dbReference>
<dbReference type="PANTHER" id="PTHR23132:SF23">
    <property type="entry name" value="D-ALANINE--D-ALANINE LIGASE B"/>
    <property type="match status" value="1"/>
</dbReference>
<dbReference type="Pfam" id="PF07478">
    <property type="entry name" value="Dala_Dala_lig_C"/>
    <property type="match status" value="1"/>
</dbReference>
<dbReference type="Pfam" id="PF01820">
    <property type="entry name" value="Dala_Dala_lig_N"/>
    <property type="match status" value="1"/>
</dbReference>
<dbReference type="SUPFAM" id="SSF56059">
    <property type="entry name" value="Glutathione synthetase ATP-binding domain-like"/>
    <property type="match status" value="1"/>
</dbReference>
<dbReference type="SUPFAM" id="SSF52440">
    <property type="entry name" value="PreATP-grasp domain"/>
    <property type="match status" value="1"/>
</dbReference>
<dbReference type="PROSITE" id="PS50975">
    <property type="entry name" value="ATP_GRASP"/>
    <property type="match status" value="1"/>
</dbReference>
<dbReference type="PROSITE" id="PS00843">
    <property type="entry name" value="DALA_DALA_LIGASE_1"/>
    <property type="match status" value="1"/>
</dbReference>
<proteinExistence type="inferred from homology"/>
<protein>
    <recommendedName>
        <fullName evidence="2">D-alanine--D-alanine ligase</fullName>
        <ecNumber evidence="2">6.3.2.4</ecNumber>
    </recommendedName>
    <alternativeName>
        <fullName evidence="2">D-Ala-D-Ala ligase</fullName>
    </alternativeName>
    <alternativeName>
        <fullName evidence="2">D-alanylalanine synthetase</fullName>
    </alternativeName>
</protein>